<name>NUOI_DINSH</name>
<accession>A8LIV0</accession>
<gene>
    <name evidence="1" type="primary">nuoI</name>
    <name type="ordered locus">Dshi_1322</name>
</gene>
<evidence type="ECO:0000255" key="1">
    <source>
        <dbReference type="HAMAP-Rule" id="MF_01351"/>
    </source>
</evidence>
<comment type="function">
    <text evidence="1">NDH-1 shuttles electrons from NADH, via FMN and iron-sulfur (Fe-S) centers, to quinones in the respiratory chain. The immediate electron acceptor for the enzyme in this species is believed to be ubiquinone. Couples the redox reaction to proton translocation (for every two electrons transferred, four hydrogen ions are translocated across the cytoplasmic membrane), and thus conserves the redox energy in a proton gradient.</text>
</comment>
<comment type="catalytic activity">
    <reaction evidence="1">
        <text>a quinone + NADH + 5 H(+)(in) = a quinol + NAD(+) + 4 H(+)(out)</text>
        <dbReference type="Rhea" id="RHEA:57888"/>
        <dbReference type="ChEBI" id="CHEBI:15378"/>
        <dbReference type="ChEBI" id="CHEBI:24646"/>
        <dbReference type="ChEBI" id="CHEBI:57540"/>
        <dbReference type="ChEBI" id="CHEBI:57945"/>
        <dbReference type="ChEBI" id="CHEBI:132124"/>
    </reaction>
</comment>
<comment type="cofactor">
    <cofactor evidence="1">
        <name>[4Fe-4S] cluster</name>
        <dbReference type="ChEBI" id="CHEBI:49883"/>
    </cofactor>
    <text evidence="1">Binds 2 [4Fe-4S] clusters per subunit.</text>
</comment>
<comment type="subunit">
    <text evidence="1">NDH-1 is composed of 14 different subunits. Subunits NuoA, H, J, K, L, M, N constitute the membrane sector of the complex.</text>
</comment>
<comment type="subcellular location">
    <subcellularLocation>
        <location evidence="1">Cell inner membrane</location>
        <topology evidence="1">Peripheral membrane protein</topology>
    </subcellularLocation>
</comment>
<comment type="similarity">
    <text evidence="1">Belongs to the complex I 23 kDa subunit family.</text>
</comment>
<organism>
    <name type="scientific">Dinoroseobacter shibae (strain DSM 16493 / NCIMB 14021 / DFL 12)</name>
    <dbReference type="NCBI Taxonomy" id="398580"/>
    <lineage>
        <taxon>Bacteria</taxon>
        <taxon>Pseudomonadati</taxon>
        <taxon>Pseudomonadota</taxon>
        <taxon>Alphaproteobacteria</taxon>
        <taxon>Rhodobacterales</taxon>
        <taxon>Roseobacteraceae</taxon>
        <taxon>Dinoroseobacter</taxon>
    </lineage>
</organism>
<reference key="1">
    <citation type="journal article" date="2010" name="ISME J.">
        <title>The complete genome sequence of the algal symbiont Dinoroseobacter shibae: a hitchhiker's guide to life in the sea.</title>
        <authorList>
            <person name="Wagner-Dobler I."/>
            <person name="Ballhausen B."/>
            <person name="Berger M."/>
            <person name="Brinkhoff T."/>
            <person name="Buchholz I."/>
            <person name="Bunk B."/>
            <person name="Cypionka H."/>
            <person name="Daniel R."/>
            <person name="Drepper T."/>
            <person name="Gerdts G."/>
            <person name="Hahnke S."/>
            <person name="Han C."/>
            <person name="Jahn D."/>
            <person name="Kalhoefer D."/>
            <person name="Kiss H."/>
            <person name="Klenk H.P."/>
            <person name="Kyrpides N."/>
            <person name="Liebl W."/>
            <person name="Liesegang H."/>
            <person name="Meincke L."/>
            <person name="Pati A."/>
            <person name="Petersen J."/>
            <person name="Piekarski T."/>
            <person name="Pommerenke C."/>
            <person name="Pradella S."/>
            <person name="Pukall R."/>
            <person name="Rabus R."/>
            <person name="Stackebrandt E."/>
            <person name="Thole S."/>
            <person name="Thompson L."/>
            <person name="Tielen P."/>
            <person name="Tomasch J."/>
            <person name="von Jan M."/>
            <person name="Wanphrut N."/>
            <person name="Wichels A."/>
            <person name="Zech H."/>
            <person name="Simon M."/>
        </authorList>
    </citation>
    <scope>NUCLEOTIDE SEQUENCE [LARGE SCALE GENOMIC DNA]</scope>
    <source>
        <strain>DSM 16493 / NCIMB 14021 / DFL 12</strain>
    </source>
</reference>
<proteinExistence type="inferred from homology"/>
<keyword id="KW-0004">4Fe-4S</keyword>
<keyword id="KW-0997">Cell inner membrane</keyword>
<keyword id="KW-1003">Cell membrane</keyword>
<keyword id="KW-0408">Iron</keyword>
<keyword id="KW-0411">Iron-sulfur</keyword>
<keyword id="KW-0472">Membrane</keyword>
<keyword id="KW-0479">Metal-binding</keyword>
<keyword id="KW-0520">NAD</keyword>
<keyword id="KW-0874">Quinone</keyword>
<keyword id="KW-1185">Reference proteome</keyword>
<keyword id="KW-0677">Repeat</keyword>
<keyword id="KW-1278">Translocase</keyword>
<keyword id="KW-0830">Ubiquinone</keyword>
<protein>
    <recommendedName>
        <fullName evidence="1">NADH-quinone oxidoreductase subunit I</fullName>
        <ecNumber evidence="1">7.1.1.-</ecNumber>
    </recommendedName>
    <alternativeName>
        <fullName evidence="1">NADH dehydrogenase I subunit I</fullName>
    </alternativeName>
    <alternativeName>
        <fullName evidence="1">NDH-1 subunit I</fullName>
    </alternativeName>
</protein>
<dbReference type="EC" id="7.1.1.-" evidence="1"/>
<dbReference type="EMBL" id="CP000830">
    <property type="protein sequence ID" value="ABV93064.1"/>
    <property type="molecule type" value="Genomic_DNA"/>
</dbReference>
<dbReference type="RefSeq" id="WP_012177994.1">
    <property type="nucleotide sequence ID" value="NC_009952.1"/>
</dbReference>
<dbReference type="SMR" id="A8LIV0"/>
<dbReference type="STRING" id="398580.Dshi_1322"/>
<dbReference type="KEGG" id="dsh:Dshi_1322"/>
<dbReference type="eggNOG" id="COG1143">
    <property type="taxonomic scope" value="Bacteria"/>
</dbReference>
<dbReference type="HOGENOM" id="CLU_067218_5_1_5"/>
<dbReference type="OrthoDB" id="9808559at2"/>
<dbReference type="Proteomes" id="UP000006833">
    <property type="component" value="Chromosome"/>
</dbReference>
<dbReference type="GO" id="GO:0005886">
    <property type="term" value="C:plasma membrane"/>
    <property type="evidence" value="ECO:0007669"/>
    <property type="project" value="UniProtKB-SubCell"/>
</dbReference>
<dbReference type="GO" id="GO:0051539">
    <property type="term" value="F:4 iron, 4 sulfur cluster binding"/>
    <property type="evidence" value="ECO:0007669"/>
    <property type="project" value="UniProtKB-KW"/>
</dbReference>
<dbReference type="GO" id="GO:0005506">
    <property type="term" value="F:iron ion binding"/>
    <property type="evidence" value="ECO:0007669"/>
    <property type="project" value="UniProtKB-UniRule"/>
</dbReference>
<dbReference type="GO" id="GO:0050136">
    <property type="term" value="F:NADH:ubiquinone reductase (non-electrogenic) activity"/>
    <property type="evidence" value="ECO:0007669"/>
    <property type="project" value="UniProtKB-UniRule"/>
</dbReference>
<dbReference type="GO" id="GO:0048038">
    <property type="term" value="F:quinone binding"/>
    <property type="evidence" value="ECO:0007669"/>
    <property type="project" value="UniProtKB-KW"/>
</dbReference>
<dbReference type="GO" id="GO:0009060">
    <property type="term" value="P:aerobic respiration"/>
    <property type="evidence" value="ECO:0007669"/>
    <property type="project" value="TreeGrafter"/>
</dbReference>
<dbReference type="FunFam" id="3.30.70.3270:FF:000001">
    <property type="entry name" value="NADH-quinone oxidoreductase subunit I 1"/>
    <property type="match status" value="1"/>
</dbReference>
<dbReference type="Gene3D" id="3.30.70.3270">
    <property type="match status" value="1"/>
</dbReference>
<dbReference type="HAMAP" id="MF_01351">
    <property type="entry name" value="NDH1_NuoI"/>
    <property type="match status" value="1"/>
</dbReference>
<dbReference type="InterPro" id="IPR017896">
    <property type="entry name" value="4Fe4S_Fe-S-bd"/>
</dbReference>
<dbReference type="InterPro" id="IPR017900">
    <property type="entry name" value="4Fe4S_Fe_S_CS"/>
</dbReference>
<dbReference type="InterPro" id="IPR010226">
    <property type="entry name" value="NADH_quinone_OxRdtase_chainI"/>
</dbReference>
<dbReference type="NCBIfam" id="TIGR01971">
    <property type="entry name" value="NuoI"/>
    <property type="match status" value="1"/>
</dbReference>
<dbReference type="NCBIfam" id="NF004538">
    <property type="entry name" value="PRK05888.1-4"/>
    <property type="match status" value="1"/>
</dbReference>
<dbReference type="NCBIfam" id="NF004539">
    <property type="entry name" value="PRK05888.1-5"/>
    <property type="match status" value="1"/>
</dbReference>
<dbReference type="PANTHER" id="PTHR10849:SF20">
    <property type="entry name" value="NADH DEHYDROGENASE [UBIQUINONE] IRON-SULFUR PROTEIN 8, MITOCHONDRIAL"/>
    <property type="match status" value="1"/>
</dbReference>
<dbReference type="PANTHER" id="PTHR10849">
    <property type="entry name" value="NADH DEHYDROGENASE UBIQUINONE IRON-SULFUR PROTEIN 8, MITOCHONDRIAL"/>
    <property type="match status" value="1"/>
</dbReference>
<dbReference type="Pfam" id="PF12838">
    <property type="entry name" value="Fer4_7"/>
    <property type="match status" value="1"/>
</dbReference>
<dbReference type="SUPFAM" id="SSF54862">
    <property type="entry name" value="4Fe-4S ferredoxins"/>
    <property type="match status" value="1"/>
</dbReference>
<dbReference type="PROSITE" id="PS00198">
    <property type="entry name" value="4FE4S_FER_1"/>
    <property type="match status" value="2"/>
</dbReference>
<dbReference type="PROSITE" id="PS51379">
    <property type="entry name" value="4FE4S_FER_2"/>
    <property type="match status" value="2"/>
</dbReference>
<sequence>MAQMDYTRAAKYFLLFDFFAGFKLGLKYFFKPKATLAYPHEKGPLSPRFRGEHALRRYPNGEERCIACKLCEAICPAQAITIDAEPRDDGSRRTTRYDIDMTKCIYCGFCQEACPVDAIVEGPNFEFATETREELFYDKEKLLDNGERWEAEIARNLELDAPYR</sequence>
<feature type="chain" id="PRO_1000143642" description="NADH-quinone oxidoreductase subunit I">
    <location>
        <begin position="1"/>
        <end position="164"/>
    </location>
</feature>
<feature type="domain" description="4Fe-4S ferredoxin-type 1" evidence="1">
    <location>
        <begin position="55"/>
        <end position="85"/>
    </location>
</feature>
<feature type="domain" description="4Fe-4S ferredoxin-type 2" evidence="1">
    <location>
        <begin position="95"/>
        <end position="124"/>
    </location>
</feature>
<feature type="binding site" evidence="1">
    <location>
        <position position="65"/>
    </location>
    <ligand>
        <name>[4Fe-4S] cluster</name>
        <dbReference type="ChEBI" id="CHEBI:49883"/>
        <label>1</label>
    </ligand>
</feature>
<feature type="binding site" evidence="1">
    <location>
        <position position="68"/>
    </location>
    <ligand>
        <name>[4Fe-4S] cluster</name>
        <dbReference type="ChEBI" id="CHEBI:49883"/>
        <label>1</label>
    </ligand>
</feature>
<feature type="binding site" evidence="1">
    <location>
        <position position="71"/>
    </location>
    <ligand>
        <name>[4Fe-4S] cluster</name>
        <dbReference type="ChEBI" id="CHEBI:49883"/>
        <label>1</label>
    </ligand>
</feature>
<feature type="binding site" evidence="1">
    <location>
        <position position="75"/>
    </location>
    <ligand>
        <name>[4Fe-4S] cluster</name>
        <dbReference type="ChEBI" id="CHEBI:49883"/>
        <label>2</label>
    </ligand>
</feature>
<feature type="binding site" evidence="1">
    <location>
        <position position="104"/>
    </location>
    <ligand>
        <name>[4Fe-4S] cluster</name>
        <dbReference type="ChEBI" id="CHEBI:49883"/>
        <label>2</label>
    </ligand>
</feature>
<feature type="binding site" evidence="1">
    <location>
        <position position="107"/>
    </location>
    <ligand>
        <name>[4Fe-4S] cluster</name>
        <dbReference type="ChEBI" id="CHEBI:49883"/>
        <label>2</label>
    </ligand>
</feature>
<feature type="binding site" evidence="1">
    <location>
        <position position="110"/>
    </location>
    <ligand>
        <name>[4Fe-4S] cluster</name>
        <dbReference type="ChEBI" id="CHEBI:49883"/>
        <label>2</label>
    </ligand>
</feature>
<feature type="binding site" evidence="1">
    <location>
        <position position="114"/>
    </location>
    <ligand>
        <name>[4Fe-4S] cluster</name>
        <dbReference type="ChEBI" id="CHEBI:49883"/>
        <label>1</label>
    </ligand>
</feature>